<protein>
    <recommendedName>
        <fullName>Kunitz-type serine protease inhibitor stephenin-1</fullName>
    </recommendedName>
</protein>
<comment type="function">
    <text evidence="1">Serine protease inhibitor.</text>
</comment>
<comment type="subcellular location">
    <subcellularLocation>
        <location evidence="1">Secreted</location>
    </subcellularLocation>
</comment>
<comment type="tissue specificity">
    <text>Expressed by the venom gland.</text>
</comment>
<comment type="similarity">
    <text evidence="4">Belongs to the venom Kunitz-type family.</text>
</comment>
<proteinExistence type="evidence at transcript level"/>
<feature type="signal peptide" evidence="2">
    <location>
        <begin position="1"/>
        <end position="24"/>
    </location>
</feature>
<feature type="chain" id="PRO_5000395576" description="Kunitz-type serine protease inhibitor stephenin-1">
    <location>
        <begin position="25"/>
        <end position="83"/>
    </location>
</feature>
<feature type="domain" description="BPTI/Kunitz inhibitor" evidence="3">
    <location>
        <begin position="31"/>
        <end position="81"/>
    </location>
</feature>
<feature type="site" description="Reactive bond for chymotrypsin" evidence="1">
    <location>
        <begin position="41"/>
        <end position="42"/>
    </location>
</feature>
<feature type="disulfide bond" evidence="3">
    <location>
        <begin position="31"/>
        <end position="81"/>
    </location>
</feature>
<feature type="disulfide bond" evidence="3">
    <location>
        <begin position="40"/>
        <end position="64"/>
    </location>
</feature>
<feature type="disulfide bond" evidence="3">
    <location>
        <begin position="56"/>
        <end position="77"/>
    </location>
</feature>
<evidence type="ECO:0000250" key="1"/>
<evidence type="ECO:0000255" key="2"/>
<evidence type="ECO:0000255" key="3">
    <source>
        <dbReference type="PROSITE-ProRule" id="PRU00031"/>
    </source>
</evidence>
<evidence type="ECO:0000305" key="4"/>
<sequence length="83" mass="9170">MSSGGLLLLLGLLTLWEVLTPVSSKDRPEFCELPADPGPCNALSQAYYYNPVQHKCLKFRYGGCKANPNTFKTIEECKRTCAA</sequence>
<name>VKT1_HOPST</name>
<organism>
    <name type="scientific">Hoplocephalus stephensii</name>
    <name type="common">Stephens's banded snake</name>
    <dbReference type="NCBI Taxonomy" id="196418"/>
    <lineage>
        <taxon>Eukaryota</taxon>
        <taxon>Metazoa</taxon>
        <taxon>Chordata</taxon>
        <taxon>Craniata</taxon>
        <taxon>Vertebrata</taxon>
        <taxon>Euteleostomi</taxon>
        <taxon>Lepidosauria</taxon>
        <taxon>Squamata</taxon>
        <taxon>Bifurcata</taxon>
        <taxon>Unidentata</taxon>
        <taxon>Episquamata</taxon>
        <taxon>Toxicofera</taxon>
        <taxon>Serpentes</taxon>
        <taxon>Colubroidea</taxon>
        <taxon>Elapidae</taxon>
        <taxon>Notechinae</taxon>
        <taxon>Hoplocephalus</taxon>
    </lineage>
</organism>
<keyword id="KW-1015">Disulfide bond</keyword>
<keyword id="KW-0646">Protease inhibitor</keyword>
<keyword id="KW-0964">Secreted</keyword>
<keyword id="KW-0722">Serine protease inhibitor</keyword>
<keyword id="KW-0732">Signal</keyword>
<accession>B5KF94</accession>
<dbReference type="EMBL" id="EF025515">
    <property type="protein sequence ID" value="ABM86987.1"/>
    <property type="molecule type" value="mRNA"/>
</dbReference>
<dbReference type="SMR" id="B5KF94"/>
<dbReference type="GO" id="GO:0005615">
    <property type="term" value="C:extracellular space"/>
    <property type="evidence" value="ECO:0007669"/>
    <property type="project" value="TreeGrafter"/>
</dbReference>
<dbReference type="GO" id="GO:0004867">
    <property type="term" value="F:serine-type endopeptidase inhibitor activity"/>
    <property type="evidence" value="ECO:0007669"/>
    <property type="project" value="UniProtKB-KW"/>
</dbReference>
<dbReference type="CDD" id="cd22594">
    <property type="entry name" value="Kunitz_textilinin-like"/>
    <property type="match status" value="1"/>
</dbReference>
<dbReference type="FunFam" id="4.10.410.10:FF:000021">
    <property type="entry name" value="Serine protease inhibitor, putative"/>
    <property type="match status" value="1"/>
</dbReference>
<dbReference type="Gene3D" id="4.10.410.10">
    <property type="entry name" value="Pancreatic trypsin inhibitor Kunitz domain"/>
    <property type="match status" value="1"/>
</dbReference>
<dbReference type="InterPro" id="IPR002223">
    <property type="entry name" value="Kunitz_BPTI"/>
</dbReference>
<dbReference type="InterPro" id="IPR036880">
    <property type="entry name" value="Kunitz_BPTI_sf"/>
</dbReference>
<dbReference type="InterPro" id="IPR020901">
    <property type="entry name" value="Prtase_inh_Kunz-CS"/>
</dbReference>
<dbReference type="InterPro" id="IPR050098">
    <property type="entry name" value="TFPI/VKTCI-like"/>
</dbReference>
<dbReference type="PANTHER" id="PTHR10083:SF374">
    <property type="entry name" value="BPTI_KUNITZ INHIBITOR DOMAIN-CONTAINING PROTEIN"/>
    <property type="match status" value="1"/>
</dbReference>
<dbReference type="PANTHER" id="PTHR10083">
    <property type="entry name" value="KUNITZ-TYPE PROTEASE INHIBITOR-RELATED"/>
    <property type="match status" value="1"/>
</dbReference>
<dbReference type="Pfam" id="PF00014">
    <property type="entry name" value="Kunitz_BPTI"/>
    <property type="match status" value="1"/>
</dbReference>
<dbReference type="PRINTS" id="PR00759">
    <property type="entry name" value="BASICPTASE"/>
</dbReference>
<dbReference type="SMART" id="SM00131">
    <property type="entry name" value="KU"/>
    <property type="match status" value="1"/>
</dbReference>
<dbReference type="SUPFAM" id="SSF57362">
    <property type="entry name" value="BPTI-like"/>
    <property type="match status" value="1"/>
</dbReference>
<dbReference type="PROSITE" id="PS00280">
    <property type="entry name" value="BPTI_KUNITZ_1"/>
    <property type="match status" value="1"/>
</dbReference>
<dbReference type="PROSITE" id="PS50279">
    <property type="entry name" value="BPTI_KUNITZ_2"/>
    <property type="match status" value="1"/>
</dbReference>
<reference key="1">
    <citation type="submission" date="2006-09" db="EMBL/GenBank/DDBJ databases">
        <title>Serine protease inhibitors from the venom of Australian snakes.</title>
        <authorList>
            <person name="Earl S."/>
        </authorList>
    </citation>
    <scope>NUCLEOTIDE SEQUENCE [MRNA]</scope>
    <source>
        <tissue>Venom gland</tissue>
    </source>
</reference>